<name>RL4_CAMFF</name>
<organism>
    <name type="scientific">Campylobacter fetus subsp. fetus (strain 82-40)</name>
    <dbReference type="NCBI Taxonomy" id="360106"/>
    <lineage>
        <taxon>Bacteria</taxon>
        <taxon>Pseudomonadati</taxon>
        <taxon>Campylobacterota</taxon>
        <taxon>Epsilonproteobacteria</taxon>
        <taxon>Campylobacterales</taxon>
        <taxon>Campylobacteraceae</taxon>
        <taxon>Campylobacter</taxon>
    </lineage>
</organism>
<accession>A0RM12</accession>
<dbReference type="EMBL" id="CP000487">
    <property type="protein sequence ID" value="ABK82570.1"/>
    <property type="molecule type" value="Genomic_DNA"/>
</dbReference>
<dbReference type="RefSeq" id="WP_002847960.1">
    <property type="nucleotide sequence ID" value="NC_008599.1"/>
</dbReference>
<dbReference type="SMR" id="A0RM12"/>
<dbReference type="GeneID" id="61063878"/>
<dbReference type="KEGG" id="cff:CFF8240_0035"/>
<dbReference type="eggNOG" id="COG0088">
    <property type="taxonomic scope" value="Bacteria"/>
</dbReference>
<dbReference type="HOGENOM" id="CLU_041575_5_2_7"/>
<dbReference type="Proteomes" id="UP000000760">
    <property type="component" value="Chromosome"/>
</dbReference>
<dbReference type="GO" id="GO:1990904">
    <property type="term" value="C:ribonucleoprotein complex"/>
    <property type="evidence" value="ECO:0007669"/>
    <property type="project" value="UniProtKB-KW"/>
</dbReference>
<dbReference type="GO" id="GO:0005840">
    <property type="term" value="C:ribosome"/>
    <property type="evidence" value="ECO:0007669"/>
    <property type="project" value="UniProtKB-KW"/>
</dbReference>
<dbReference type="GO" id="GO:0019843">
    <property type="term" value="F:rRNA binding"/>
    <property type="evidence" value="ECO:0007669"/>
    <property type="project" value="UniProtKB-UniRule"/>
</dbReference>
<dbReference type="GO" id="GO:0003735">
    <property type="term" value="F:structural constituent of ribosome"/>
    <property type="evidence" value="ECO:0007669"/>
    <property type="project" value="InterPro"/>
</dbReference>
<dbReference type="GO" id="GO:0006412">
    <property type="term" value="P:translation"/>
    <property type="evidence" value="ECO:0007669"/>
    <property type="project" value="UniProtKB-UniRule"/>
</dbReference>
<dbReference type="FunFam" id="3.40.1370.10:FF:000008">
    <property type="entry name" value="50S ribosomal protein L4"/>
    <property type="match status" value="1"/>
</dbReference>
<dbReference type="Gene3D" id="3.40.1370.10">
    <property type="match status" value="1"/>
</dbReference>
<dbReference type="HAMAP" id="MF_01328_B">
    <property type="entry name" value="Ribosomal_uL4_B"/>
    <property type="match status" value="1"/>
</dbReference>
<dbReference type="InterPro" id="IPR002136">
    <property type="entry name" value="Ribosomal_uL4"/>
</dbReference>
<dbReference type="InterPro" id="IPR013005">
    <property type="entry name" value="Ribosomal_uL4-like"/>
</dbReference>
<dbReference type="InterPro" id="IPR023574">
    <property type="entry name" value="Ribosomal_uL4_dom_sf"/>
</dbReference>
<dbReference type="NCBIfam" id="TIGR03953">
    <property type="entry name" value="rplD_bact"/>
    <property type="match status" value="1"/>
</dbReference>
<dbReference type="PANTHER" id="PTHR10746">
    <property type="entry name" value="50S RIBOSOMAL PROTEIN L4"/>
    <property type="match status" value="1"/>
</dbReference>
<dbReference type="PANTHER" id="PTHR10746:SF6">
    <property type="entry name" value="LARGE RIBOSOMAL SUBUNIT PROTEIN UL4M"/>
    <property type="match status" value="1"/>
</dbReference>
<dbReference type="Pfam" id="PF00573">
    <property type="entry name" value="Ribosomal_L4"/>
    <property type="match status" value="1"/>
</dbReference>
<dbReference type="SUPFAM" id="SSF52166">
    <property type="entry name" value="Ribosomal protein L4"/>
    <property type="match status" value="1"/>
</dbReference>
<gene>
    <name evidence="1" type="primary">rplD</name>
    <name type="ordered locus">CFF8240_0035</name>
</gene>
<sequence>MSKIAVLNEKFEKTSEIELPASYAEVNSHNLYLYVKSYLAGIRANSAHTKGRSDVSGGGKKPWRQKGRGGARAGSTRTNVWVGGAVAFGPKNNRNYDQKVNKKQKRLALEFALNDKVANGKFFAVDSIEISSGKTKDAASIINKLGVRDALIIKNELDAKTLLAFRNLANCYVIDASEVNAYLVSVYSAVIAEKAALQSIVKEG</sequence>
<protein>
    <recommendedName>
        <fullName evidence="1">Large ribosomal subunit protein uL4</fullName>
    </recommendedName>
    <alternativeName>
        <fullName evidence="3">50S ribosomal protein L4</fullName>
    </alternativeName>
</protein>
<proteinExistence type="inferred from homology"/>
<reference key="1">
    <citation type="submission" date="2006-11" db="EMBL/GenBank/DDBJ databases">
        <title>Sequence of Campylobacter fetus subsp. fetus 82-40.</title>
        <authorList>
            <person name="Fouts D.E."/>
            <person name="Nelson K.E."/>
        </authorList>
    </citation>
    <scope>NUCLEOTIDE SEQUENCE [LARGE SCALE GENOMIC DNA]</scope>
    <source>
        <strain>82-40</strain>
    </source>
</reference>
<feature type="chain" id="PRO_1000142096" description="Large ribosomal subunit protein uL4">
    <location>
        <begin position="1"/>
        <end position="204"/>
    </location>
</feature>
<feature type="region of interest" description="Disordered" evidence="2">
    <location>
        <begin position="48"/>
        <end position="75"/>
    </location>
</feature>
<comment type="function">
    <text evidence="1">One of the primary rRNA binding proteins, this protein initially binds near the 5'-end of the 23S rRNA. It is important during the early stages of 50S assembly. It makes multiple contacts with different domains of the 23S rRNA in the assembled 50S subunit and ribosome.</text>
</comment>
<comment type="function">
    <text evidence="1">Forms part of the polypeptide exit tunnel.</text>
</comment>
<comment type="subunit">
    <text evidence="1">Part of the 50S ribosomal subunit.</text>
</comment>
<comment type="similarity">
    <text evidence="1">Belongs to the universal ribosomal protein uL4 family.</text>
</comment>
<keyword id="KW-0687">Ribonucleoprotein</keyword>
<keyword id="KW-0689">Ribosomal protein</keyword>
<keyword id="KW-0694">RNA-binding</keyword>
<keyword id="KW-0699">rRNA-binding</keyword>
<evidence type="ECO:0000255" key="1">
    <source>
        <dbReference type="HAMAP-Rule" id="MF_01328"/>
    </source>
</evidence>
<evidence type="ECO:0000256" key="2">
    <source>
        <dbReference type="SAM" id="MobiDB-lite"/>
    </source>
</evidence>
<evidence type="ECO:0000305" key="3"/>